<proteinExistence type="evidence at transcript level"/>
<name>DR100_ARATH</name>
<accession>Q00874</accession>
<accession>Q9LHK0</accession>
<organism>
    <name type="scientific">Arabidopsis thaliana</name>
    <name type="common">Mouse-ear cress</name>
    <dbReference type="NCBI Taxonomy" id="3702"/>
    <lineage>
        <taxon>Eukaryota</taxon>
        <taxon>Viridiplantae</taxon>
        <taxon>Streptophyta</taxon>
        <taxon>Embryophyta</taxon>
        <taxon>Tracheophyta</taxon>
        <taxon>Spermatophyta</taxon>
        <taxon>Magnoliopsida</taxon>
        <taxon>eudicotyledons</taxon>
        <taxon>Gunneridae</taxon>
        <taxon>Pentapetalae</taxon>
        <taxon>rosids</taxon>
        <taxon>malvids</taxon>
        <taxon>Brassicales</taxon>
        <taxon>Brassicaceae</taxon>
        <taxon>Camelineae</taxon>
        <taxon>Arabidopsis</taxon>
    </lineage>
</organism>
<evidence type="ECO:0000255" key="1"/>
<evidence type="ECO:0000305" key="2"/>
<sequence length="372" mass="39556">MRKLLASPFSSLLAVVFISVISVVRCCSPKDQTALNAFKSSLSEPNLGIFNTWSENTDCCKEWYGISCDPDSGRVTDISLRGESEDAIFQKAGRSGYMSGSIDPAVCDLTALTSLVLADWKGITGEIPPCITSLASLRILDLAGNKITGEIPAEIGKLSKLAVLNLAENQMSGEIPASLTSLIELKHLELTENGITGVIPADFGSLKMLSRVLLGRNELTGSIPESISGMERLADLDLSKNHIEGPIPEWMGNMKVLSLLNLDCNSLTGPIPGSLLSNSGLDVANLSRNALEGTIPDVFGSKTYLVSLDLSHNSLSGRIPDSLSSAKFVGHLDISHNKLCGRIPTGFPFDHLEATSFSDNQCLCGGPLTTSC</sequence>
<keyword id="KW-0227">DNA damage</keyword>
<keyword id="KW-0234">DNA repair</keyword>
<keyword id="KW-0433">Leucine-rich repeat</keyword>
<keyword id="KW-1185">Reference proteome</keyword>
<keyword id="KW-0677">Repeat</keyword>
<keyword id="KW-0732">Signal</keyword>
<gene>
    <name type="primary">DRT100</name>
    <name type="ordered locus">At3g12610</name>
    <name type="ORF">MMF12.5</name>
    <name type="ORF">T2E22.8</name>
    <name type="ORF">T2E22_107</name>
</gene>
<reference key="1">
    <citation type="journal article" date="1992" name="Proc. Natl. Acad. Sci. U.S.A.">
        <title>A plant cDNA that partially complements Escherichia coli recA mutations predicts a polypeptide not strongly homologous to RecA proteins.</title>
        <authorList>
            <person name="Pang Q."/>
            <person name="Hays J.B."/>
            <person name="Rajagopal I."/>
        </authorList>
    </citation>
    <scope>PRELIMINARY NUCLEOTIDE SEQUENCE OF 4-372</scope>
    <source>
        <strain>cv. Columbia</strain>
    </source>
</reference>
<reference key="2">
    <citation type="journal article" date="2000" name="DNA Res.">
        <title>Structural analysis of Arabidopsis thaliana chromosome 3. II. Sequence features of the 4,251,695 bp regions covered by 90 P1, TAC and BAC clones.</title>
        <authorList>
            <person name="Kaneko T."/>
            <person name="Katoh T."/>
            <person name="Sato S."/>
            <person name="Nakamura Y."/>
            <person name="Asamizu E."/>
            <person name="Tabata S."/>
        </authorList>
    </citation>
    <scope>NUCLEOTIDE SEQUENCE [LARGE SCALE GENOMIC DNA]</scope>
    <source>
        <strain>cv. Columbia</strain>
    </source>
</reference>
<reference key="3">
    <citation type="journal article" date="2000" name="Nature">
        <title>Sequence and analysis of chromosome 3 of the plant Arabidopsis thaliana.</title>
        <authorList>
            <person name="Salanoubat M."/>
            <person name="Lemcke K."/>
            <person name="Rieger M."/>
            <person name="Ansorge W."/>
            <person name="Unseld M."/>
            <person name="Fartmann B."/>
            <person name="Valle G."/>
            <person name="Bloecker H."/>
            <person name="Perez-Alonso M."/>
            <person name="Obermaier B."/>
            <person name="Delseny M."/>
            <person name="Boutry M."/>
            <person name="Grivell L.A."/>
            <person name="Mache R."/>
            <person name="Puigdomenech P."/>
            <person name="De Simone V."/>
            <person name="Choisne N."/>
            <person name="Artiguenave F."/>
            <person name="Robert C."/>
            <person name="Brottier P."/>
            <person name="Wincker P."/>
            <person name="Cattolico L."/>
            <person name="Weissenbach J."/>
            <person name="Saurin W."/>
            <person name="Quetier F."/>
            <person name="Schaefer M."/>
            <person name="Mueller-Auer S."/>
            <person name="Gabel C."/>
            <person name="Fuchs M."/>
            <person name="Benes V."/>
            <person name="Wurmbach E."/>
            <person name="Drzonek H."/>
            <person name="Erfle H."/>
            <person name="Jordan N."/>
            <person name="Bangert S."/>
            <person name="Wiedelmann R."/>
            <person name="Kranz H."/>
            <person name="Voss H."/>
            <person name="Holland R."/>
            <person name="Brandt P."/>
            <person name="Nyakatura G."/>
            <person name="Vezzi A."/>
            <person name="D'Angelo M."/>
            <person name="Pallavicini A."/>
            <person name="Toppo S."/>
            <person name="Simionati B."/>
            <person name="Conrad A."/>
            <person name="Hornischer K."/>
            <person name="Kauer G."/>
            <person name="Loehnert T.-H."/>
            <person name="Nordsiek G."/>
            <person name="Reichelt J."/>
            <person name="Scharfe M."/>
            <person name="Schoen O."/>
            <person name="Bargues M."/>
            <person name="Terol J."/>
            <person name="Climent J."/>
            <person name="Navarro P."/>
            <person name="Collado C."/>
            <person name="Perez-Perez A."/>
            <person name="Ottenwaelder B."/>
            <person name="Duchemin D."/>
            <person name="Cooke R."/>
            <person name="Laudie M."/>
            <person name="Berger-Llauro C."/>
            <person name="Purnelle B."/>
            <person name="Masuy D."/>
            <person name="de Haan M."/>
            <person name="Maarse A.C."/>
            <person name="Alcaraz J.-P."/>
            <person name="Cottet A."/>
            <person name="Casacuberta E."/>
            <person name="Monfort A."/>
            <person name="Argiriou A."/>
            <person name="Flores M."/>
            <person name="Liguori R."/>
            <person name="Vitale D."/>
            <person name="Mannhaupt G."/>
            <person name="Haase D."/>
            <person name="Schoof H."/>
            <person name="Rudd S."/>
            <person name="Zaccaria P."/>
            <person name="Mewes H.-W."/>
            <person name="Mayer K.F.X."/>
            <person name="Kaul S."/>
            <person name="Town C.D."/>
            <person name="Koo H.L."/>
            <person name="Tallon L.J."/>
            <person name="Jenkins J."/>
            <person name="Rooney T."/>
            <person name="Rizzo M."/>
            <person name="Walts A."/>
            <person name="Utterback T."/>
            <person name="Fujii C.Y."/>
            <person name="Shea T.P."/>
            <person name="Creasy T.H."/>
            <person name="Haas B."/>
            <person name="Maiti R."/>
            <person name="Wu D."/>
            <person name="Peterson J."/>
            <person name="Van Aken S."/>
            <person name="Pai G."/>
            <person name="Militscher J."/>
            <person name="Sellers P."/>
            <person name="Gill J.E."/>
            <person name="Feldblyum T.V."/>
            <person name="Preuss D."/>
            <person name="Lin X."/>
            <person name="Nierman W.C."/>
            <person name="Salzberg S.L."/>
            <person name="White O."/>
            <person name="Venter J.C."/>
            <person name="Fraser C.M."/>
            <person name="Kaneko T."/>
            <person name="Nakamura Y."/>
            <person name="Sato S."/>
            <person name="Kato T."/>
            <person name="Asamizu E."/>
            <person name="Sasamoto S."/>
            <person name="Kimura T."/>
            <person name="Idesawa K."/>
            <person name="Kawashima K."/>
            <person name="Kishida Y."/>
            <person name="Kiyokawa C."/>
            <person name="Kohara M."/>
            <person name="Matsumoto M."/>
            <person name="Matsuno A."/>
            <person name="Muraki A."/>
            <person name="Nakayama S."/>
            <person name="Nakazaki N."/>
            <person name="Shinpo S."/>
            <person name="Takeuchi C."/>
            <person name="Wada T."/>
            <person name="Watanabe A."/>
            <person name="Yamada M."/>
            <person name="Yasuda M."/>
            <person name="Tabata S."/>
        </authorList>
    </citation>
    <scope>NUCLEOTIDE SEQUENCE [LARGE SCALE GENOMIC DNA]</scope>
    <source>
        <strain>cv. Columbia</strain>
    </source>
</reference>
<reference key="4">
    <citation type="journal article" date="2017" name="Plant J.">
        <title>Araport11: a complete reannotation of the Arabidopsis thaliana reference genome.</title>
        <authorList>
            <person name="Cheng C.Y."/>
            <person name="Krishnakumar V."/>
            <person name="Chan A.P."/>
            <person name="Thibaud-Nissen F."/>
            <person name="Schobel S."/>
            <person name="Town C.D."/>
        </authorList>
    </citation>
    <scope>GENOME REANNOTATION</scope>
    <source>
        <strain>cv. Columbia</strain>
    </source>
</reference>
<reference key="5">
    <citation type="journal article" date="2003" name="Science">
        <title>Empirical analysis of transcriptional activity in the Arabidopsis genome.</title>
        <authorList>
            <person name="Yamada K."/>
            <person name="Lim J."/>
            <person name="Dale J.M."/>
            <person name="Chen H."/>
            <person name="Shinn P."/>
            <person name="Palm C.J."/>
            <person name="Southwick A.M."/>
            <person name="Wu H.C."/>
            <person name="Kim C.J."/>
            <person name="Nguyen M."/>
            <person name="Pham P.K."/>
            <person name="Cheuk R.F."/>
            <person name="Karlin-Newmann G."/>
            <person name="Liu S.X."/>
            <person name="Lam B."/>
            <person name="Sakano H."/>
            <person name="Wu T."/>
            <person name="Yu G."/>
            <person name="Miranda M."/>
            <person name="Quach H.L."/>
            <person name="Tripp M."/>
            <person name="Chang C.H."/>
            <person name="Lee J.M."/>
            <person name="Toriumi M.J."/>
            <person name="Chan M.M."/>
            <person name="Tang C.C."/>
            <person name="Onodera C.S."/>
            <person name="Deng J.M."/>
            <person name="Akiyama K."/>
            <person name="Ansari Y."/>
            <person name="Arakawa T."/>
            <person name="Banh J."/>
            <person name="Banno F."/>
            <person name="Bowser L."/>
            <person name="Brooks S.Y."/>
            <person name="Carninci P."/>
            <person name="Chao Q."/>
            <person name="Choy N."/>
            <person name="Enju A."/>
            <person name="Goldsmith A.D."/>
            <person name="Gurjal M."/>
            <person name="Hansen N.F."/>
            <person name="Hayashizaki Y."/>
            <person name="Johnson-Hopson C."/>
            <person name="Hsuan V.W."/>
            <person name="Iida K."/>
            <person name="Karnes M."/>
            <person name="Khan S."/>
            <person name="Koesema E."/>
            <person name="Ishida J."/>
            <person name="Jiang P.X."/>
            <person name="Jones T."/>
            <person name="Kawai J."/>
            <person name="Kamiya A."/>
            <person name="Meyers C."/>
            <person name="Nakajima M."/>
            <person name="Narusaka M."/>
            <person name="Seki M."/>
            <person name="Sakurai T."/>
            <person name="Satou M."/>
            <person name="Tamse R."/>
            <person name="Vaysberg M."/>
            <person name="Wallender E.K."/>
            <person name="Wong C."/>
            <person name="Yamamura Y."/>
            <person name="Yuan S."/>
            <person name="Shinozaki K."/>
            <person name="Davis R.W."/>
            <person name="Theologis A."/>
            <person name="Ecker J.R."/>
        </authorList>
    </citation>
    <scope>NUCLEOTIDE SEQUENCE [LARGE SCALE MRNA]</scope>
    <source>
        <strain>cv. Columbia</strain>
    </source>
</reference>
<reference key="6">
    <citation type="submission" date="2002-03" db="EMBL/GenBank/DDBJ databases">
        <title>Full-length cDNA from Arabidopsis thaliana.</title>
        <authorList>
            <person name="Brover V.V."/>
            <person name="Troukhan M.E."/>
            <person name="Alexandrov N.A."/>
            <person name="Lu Y.-P."/>
            <person name="Flavell R.B."/>
            <person name="Feldmann K.A."/>
        </authorList>
    </citation>
    <scope>NUCLEOTIDE SEQUENCE [LARGE SCALE MRNA]</scope>
</reference>
<protein>
    <recommendedName>
        <fullName>DNA damage-repair/toleration protein DRT100</fullName>
    </recommendedName>
</protein>
<dbReference type="EMBL" id="X66482">
    <property type="protein sequence ID" value="CAA47109.2"/>
    <property type="status" value="ALT_FRAME"/>
    <property type="molecule type" value="mRNA"/>
</dbReference>
<dbReference type="EMBL" id="AP002044">
    <property type="protein sequence ID" value="BAB02252.1"/>
    <property type="molecule type" value="Genomic_DNA"/>
</dbReference>
<dbReference type="EMBL" id="AC069474">
    <property type="protein sequence ID" value="AAG51016.1"/>
    <property type="molecule type" value="Genomic_DNA"/>
</dbReference>
<dbReference type="EMBL" id="CP002686">
    <property type="protein sequence ID" value="AEE75223.1"/>
    <property type="molecule type" value="Genomic_DNA"/>
</dbReference>
<dbReference type="EMBL" id="BT000814">
    <property type="protein sequence ID" value="AAN33189.1"/>
    <property type="molecule type" value="mRNA"/>
</dbReference>
<dbReference type="EMBL" id="AY057652">
    <property type="protein sequence ID" value="AAL15283.1"/>
    <property type="molecule type" value="mRNA"/>
</dbReference>
<dbReference type="EMBL" id="AY086931">
    <property type="protein sequence ID" value="AAM64495.1"/>
    <property type="molecule type" value="mRNA"/>
</dbReference>
<dbReference type="PIR" id="A46260">
    <property type="entry name" value="A46260"/>
</dbReference>
<dbReference type="RefSeq" id="NP_187867.1">
    <property type="nucleotide sequence ID" value="NM_112096.3"/>
</dbReference>
<dbReference type="SMR" id="Q00874"/>
<dbReference type="FunCoup" id="Q00874">
    <property type="interactions" value="31"/>
</dbReference>
<dbReference type="STRING" id="3702.Q00874"/>
<dbReference type="PaxDb" id="3702-AT3G12610.1"/>
<dbReference type="ProteomicsDB" id="241254"/>
<dbReference type="EnsemblPlants" id="AT3G12610.1">
    <property type="protein sequence ID" value="AT3G12610.1"/>
    <property type="gene ID" value="AT3G12610"/>
</dbReference>
<dbReference type="GeneID" id="820441"/>
<dbReference type="Gramene" id="AT3G12610.1">
    <property type="protein sequence ID" value="AT3G12610.1"/>
    <property type="gene ID" value="AT3G12610"/>
</dbReference>
<dbReference type="KEGG" id="ath:AT3G12610"/>
<dbReference type="Araport" id="AT3G12610"/>
<dbReference type="TAIR" id="AT3G12610">
    <property type="gene designation" value="DRT100"/>
</dbReference>
<dbReference type="eggNOG" id="KOG0619">
    <property type="taxonomic scope" value="Eukaryota"/>
</dbReference>
<dbReference type="HOGENOM" id="CLU_000288_18_22_1"/>
<dbReference type="InParanoid" id="Q00874"/>
<dbReference type="OMA" id="NSYFMAL"/>
<dbReference type="OrthoDB" id="676979at2759"/>
<dbReference type="PhylomeDB" id="Q00874"/>
<dbReference type="PRO" id="PR:Q00874"/>
<dbReference type="Proteomes" id="UP000006548">
    <property type="component" value="Chromosome 3"/>
</dbReference>
<dbReference type="ExpressionAtlas" id="Q00874">
    <property type="expression patterns" value="baseline and differential"/>
</dbReference>
<dbReference type="GO" id="GO:0009507">
    <property type="term" value="C:chloroplast"/>
    <property type="evidence" value="ECO:0000250"/>
    <property type="project" value="TAIR"/>
</dbReference>
<dbReference type="GO" id="GO:0000166">
    <property type="term" value="F:nucleotide binding"/>
    <property type="evidence" value="ECO:0000250"/>
    <property type="project" value="TAIR"/>
</dbReference>
<dbReference type="GO" id="GO:0006281">
    <property type="term" value="P:DNA repair"/>
    <property type="evidence" value="ECO:0007669"/>
    <property type="project" value="UniProtKB-KW"/>
</dbReference>
<dbReference type="FunFam" id="3.80.10.10:FF:001799">
    <property type="entry name" value="DNA-damage repair/toleration 100"/>
    <property type="match status" value="1"/>
</dbReference>
<dbReference type="FunFam" id="3.80.10.10:FF:001811">
    <property type="entry name" value="DNA-damage repair/toleration 100"/>
    <property type="match status" value="1"/>
</dbReference>
<dbReference type="Gene3D" id="3.80.10.10">
    <property type="entry name" value="Ribonuclease Inhibitor"/>
    <property type="match status" value="2"/>
</dbReference>
<dbReference type="InterPro" id="IPR053211">
    <property type="entry name" value="DNA_repair-toleration"/>
</dbReference>
<dbReference type="InterPro" id="IPR001611">
    <property type="entry name" value="Leu-rich_rpt"/>
</dbReference>
<dbReference type="InterPro" id="IPR032675">
    <property type="entry name" value="LRR_dom_sf"/>
</dbReference>
<dbReference type="InterPro" id="IPR013210">
    <property type="entry name" value="LRR_N_plant-typ"/>
</dbReference>
<dbReference type="PANTHER" id="PTHR48060">
    <property type="entry name" value="DNA DAMAGE-REPAIR/TOLERATION PROTEIN DRT100"/>
    <property type="match status" value="1"/>
</dbReference>
<dbReference type="PANTHER" id="PTHR48060:SF7">
    <property type="entry name" value="DNA DAMAGE-REPAIR_TOLERATION PROTEIN DRT100"/>
    <property type="match status" value="1"/>
</dbReference>
<dbReference type="Pfam" id="PF00560">
    <property type="entry name" value="LRR_1"/>
    <property type="match status" value="4"/>
</dbReference>
<dbReference type="Pfam" id="PF13855">
    <property type="entry name" value="LRR_8"/>
    <property type="match status" value="1"/>
</dbReference>
<dbReference type="Pfam" id="PF08263">
    <property type="entry name" value="LRRNT_2"/>
    <property type="match status" value="1"/>
</dbReference>
<dbReference type="SUPFAM" id="SSF52058">
    <property type="entry name" value="L domain-like"/>
    <property type="match status" value="1"/>
</dbReference>
<feature type="signal peptide" evidence="1">
    <location>
        <begin position="1"/>
        <end position="26"/>
    </location>
</feature>
<feature type="chain" id="PRO_0000021118" description="DNA damage-repair/toleration protein DRT100">
    <location>
        <begin position="27"/>
        <end position="372"/>
    </location>
</feature>
<feature type="repeat" description="LRR 1">
    <location>
        <begin position="136"/>
        <end position="158"/>
    </location>
</feature>
<feature type="repeat" description="LRR 2">
    <location>
        <begin position="160"/>
        <end position="183"/>
    </location>
</feature>
<feature type="repeat" description="LRR 3">
    <location>
        <begin position="184"/>
        <end position="205"/>
    </location>
</feature>
<feature type="repeat" description="LRR 4">
    <location>
        <begin position="208"/>
        <end position="230"/>
    </location>
</feature>
<feature type="repeat" description="LRR 5">
    <location>
        <begin position="232"/>
        <end position="254"/>
    </location>
</feature>
<feature type="repeat" description="LRR 6">
    <location>
        <begin position="256"/>
        <end position="277"/>
    </location>
</feature>
<feature type="repeat" description="LRR 7">
    <location>
        <begin position="280"/>
        <end position="302"/>
    </location>
</feature>
<feature type="repeat" description="LRR 8">
    <location>
        <begin position="304"/>
        <end position="326"/>
    </location>
</feature>
<feature type="repeat" description="LRR 9">
    <location>
        <begin position="328"/>
        <end position="350"/>
    </location>
</feature>
<comment type="function">
    <text>This protein is able to complement bacterial recA mutations, but its native function in the plant is not known.</text>
</comment>
<comment type="sequence caution" evidence="2">
    <conflict type="frameshift">
        <sequence resource="EMBL-CDS" id="CAA47109"/>
    </conflict>
</comment>